<proteinExistence type="inferred from homology"/>
<feature type="chain" id="PRO_0000298649" description="Uncharacterized protein SACOL1985">
    <location>
        <begin position="1"/>
        <end position="342"/>
    </location>
</feature>
<dbReference type="EMBL" id="Y10023">
    <property type="protein sequence ID" value="CAA71131.1"/>
    <property type="status" value="ALT_FRAME"/>
    <property type="molecule type" value="Genomic_DNA"/>
</dbReference>
<dbReference type="EMBL" id="CP000046">
    <property type="protein sequence ID" value="AAW36955.1"/>
    <property type="molecule type" value="Genomic_DNA"/>
</dbReference>
<dbReference type="RefSeq" id="WP_000181322.1">
    <property type="nucleotide sequence ID" value="NZ_JBGOFO010000006.1"/>
</dbReference>
<dbReference type="SMR" id="Q5HEJ8"/>
<dbReference type="KEGG" id="sac:SACOL1985"/>
<dbReference type="HOGENOM" id="CLU_038716_3_0_9"/>
<dbReference type="Proteomes" id="UP000000530">
    <property type="component" value="Chromosome"/>
</dbReference>
<dbReference type="GO" id="GO:0005829">
    <property type="term" value="C:cytosol"/>
    <property type="evidence" value="ECO:0007669"/>
    <property type="project" value="TreeGrafter"/>
</dbReference>
<dbReference type="GO" id="GO:0017057">
    <property type="term" value="F:6-phosphogluconolactonase activity"/>
    <property type="evidence" value="ECO:0007669"/>
    <property type="project" value="TreeGrafter"/>
</dbReference>
<dbReference type="FunFam" id="2.130.10.10:FF:000822">
    <property type="entry name" value="3-carboxy-cis,cis-muconate lactonizing enzyme"/>
    <property type="match status" value="1"/>
</dbReference>
<dbReference type="Gene3D" id="2.130.10.10">
    <property type="entry name" value="YVTN repeat-like/Quinoprotein amine dehydrogenase"/>
    <property type="match status" value="1"/>
</dbReference>
<dbReference type="InterPro" id="IPR050282">
    <property type="entry name" value="Cycloisomerase_2"/>
</dbReference>
<dbReference type="InterPro" id="IPR019405">
    <property type="entry name" value="Lactonase_7-beta_prop"/>
</dbReference>
<dbReference type="InterPro" id="IPR011045">
    <property type="entry name" value="N2O_reductase_N"/>
</dbReference>
<dbReference type="InterPro" id="IPR015943">
    <property type="entry name" value="WD40/YVTN_repeat-like_dom_sf"/>
</dbReference>
<dbReference type="PANTHER" id="PTHR30344:SF1">
    <property type="entry name" value="6-PHOSPHOGLUCONOLACTONASE"/>
    <property type="match status" value="1"/>
</dbReference>
<dbReference type="PANTHER" id="PTHR30344">
    <property type="entry name" value="6-PHOSPHOGLUCONOLACTONASE-RELATED"/>
    <property type="match status" value="1"/>
</dbReference>
<dbReference type="Pfam" id="PF10282">
    <property type="entry name" value="Lactonase"/>
    <property type="match status" value="1"/>
</dbReference>
<dbReference type="SUPFAM" id="SSF50974">
    <property type="entry name" value="Nitrous oxide reductase, N-terminal domain"/>
    <property type="match status" value="1"/>
</dbReference>
<gene>
    <name type="ordered locus">SACOL1985</name>
</gene>
<evidence type="ECO:0000305" key="1"/>
<protein>
    <recommendedName>
        <fullName>Uncharacterized protein SACOL1985</fullName>
    </recommendedName>
</protein>
<name>Y1985_STAAC</name>
<accession>Q5HEJ8</accession>
<accession>Q9K3E8</accession>
<organism>
    <name type="scientific">Staphylococcus aureus (strain COL)</name>
    <dbReference type="NCBI Taxonomy" id="93062"/>
    <lineage>
        <taxon>Bacteria</taxon>
        <taxon>Bacillati</taxon>
        <taxon>Bacillota</taxon>
        <taxon>Bacilli</taxon>
        <taxon>Bacillales</taxon>
        <taxon>Staphylococcaceae</taxon>
        <taxon>Staphylococcus</taxon>
    </lineage>
</organism>
<reference key="1">
    <citation type="journal article" date="1999" name="Microb. Drug Resist.">
        <title>Antibiotic resistance as a stress response: complete sequencing of a large number of chromosomal loci in Staphylococcus aureus strain COL that impact on the expression of resistance to methicillin.</title>
        <authorList>
            <person name="de Lencastre H."/>
            <person name="Wu S.-W."/>
            <person name="Pinho M.G."/>
            <person name="Ludovice A.M."/>
            <person name="Filipe S."/>
            <person name="Gardete S."/>
            <person name="Sobral R."/>
            <person name="Gill S.R."/>
            <person name="Chung M."/>
            <person name="Tomasz A."/>
        </authorList>
    </citation>
    <scope>NUCLEOTIDE SEQUENCE [GENOMIC DNA]</scope>
</reference>
<reference key="2">
    <citation type="journal article" date="2005" name="J. Bacteriol.">
        <title>Insights on evolution of virulence and resistance from the complete genome analysis of an early methicillin-resistant Staphylococcus aureus strain and a biofilm-producing methicillin-resistant Staphylococcus epidermidis strain.</title>
        <authorList>
            <person name="Gill S.R."/>
            <person name="Fouts D.E."/>
            <person name="Archer G.L."/>
            <person name="Mongodin E.F."/>
            <person name="DeBoy R.T."/>
            <person name="Ravel J."/>
            <person name="Paulsen I.T."/>
            <person name="Kolonay J.F."/>
            <person name="Brinkac L.M."/>
            <person name="Beanan M.J."/>
            <person name="Dodson R.J."/>
            <person name="Daugherty S.C."/>
            <person name="Madupu R."/>
            <person name="Angiuoli S.V."/>
            <person name="Durkin A.S."/>
            <person name="Haft D.H."/>
            <person name="Vamathevan J.J."/>
            <person name="Khouri H."/>
            <person name="Utterback T.R."/>
            <person name="Lee C."/>
            <person name="Dimitrov G."/>
            <person name="Jiang L."/>
            <person name="Qin H."/>
            <person name="Weidman J."/>
            <person name="Tran K."/>
            <person name="Kang K.H."/>
            <person name="Hance I.R."/>
            <person name="Nelson K.E."/>
            <person name="Fraser C.M."/>
        </authorList>
    </citation>
    <scope>NUCLEOTIDE SEQUENCE [LARGE SCALE GENOMIC DNA]</scope>
    <source>
        <strain>COL</strain>
    </source>
</reference>
<sequence>MTNGYIGSYTKKNGKGIYRFELNENQSRIDLLETGFELEASTYLVRNNEVLYGINKEGEQCGVASLKIDDNGELHLLNKCLSSKAGTGCYVSISEDKRYLFEAVYGAGIIRMYELNTHTGEIIRLIQELAHDFPTGTHERQDHPHAHYINQTPDGKYVAVTDLGADRIVTYKFDDNGFEFYKESLFKDSDGTRHIEFHDNGKFAYVVHELSNTVSVAEYNDGKFEELERHLTIPENFDGDTKLAAVRLSHDQQFLYVSNRGHDSIAIFKVLDNGQHLELVTITESGGQFPRDFNIASSDDLLVCAHEQGDSVVTVFERNKETGKITLCDNTRVASEGVCVIF</sequence>
<comment type="similarity">
    <text evidence="1">Belongs to the cycloisomerase 2 family.</text>
</comment>
<comment type="sequence caution" evidence="1">
    <conflict type="frameshift">
        <sequence resource="EMBL-CDS" id="CAA71131"/>
    </conflict>
</comment>